<name>HIS6_LACLS</name>
<organism>
    <name type="scientific">Lactococcus lactis subsp. cremoris (strain SK11)</name>
    <dbReference type="NCBI Taxonomy" id="272622"/>
    <lineage>
        <taxon>Bacteria</taxon>
        <taxon>Bacillati</taxon>
        <taxon>Bacillota</taxon>
        <taxon>Bacilli</taxon>
        <taxon>Lactobacillales</taxon>
        <taxon>Streptococcaceae</taxon>
        <taxon>Lactococcus</taxon>
        <taxon>Lactococcus cremoris subsp. cremoris</taxon>
    </lineage>
</organism>
<reference key="1">
    <citation type="journal article" date="2006" name="Proc. Natl. Acad. Sci. U.S.A.">
        <title>Comparative genomics of the lactic acid bacteria.</title>
        <authorList>
            <person name="Makarova K.S."/>
            <person name="Slesarev A."/>
            <person name="Wolf Y.I."/>
            <person name="Sorokin A."/>
            <person name="Mirkin B."/>
            <person name="Koonin E.V."/>
            <person name="Pavlov A."/>
            <person name="Pavlova N."/>
            <person name="Karamychev V."/>
            <person name="Polouchine N."/>
            <person name="Shakhova V."/>
            <person name="Grigoriev I."/>
            <person name="Lou Y."/>
            <person name="Rohksar D."/>
            <person name="Lucas S."/>
            <person name="Huang K."/>
            <person name="Goodstein D.M."/>
            <person name="Hawkins T."/>
            <person name="Plengvidhya V."/>
            <person name="Welker D."/>
            <person name="Hughes J."/>
            <person name="Goh Y."/>
            <person name="Benson A."/>
            <person name="Baldwin K."/>
            <person name="Lee J.-H."/>
            <person name="Diaz-Muniz I."/>
            <person name="Dosti B."/>
            <person name="Smeianov V."/>
            <person name="Wechter W."/>
            <person name="Barabote R."/>
            <person name="Lorca G."/>
            <person name="Altermann E."/>
            <person name="Barrangou R."/>
            <person name="Ganesan B."/>
            <person name="Xie Y."/>
            <person name="Rawsthorne H."/>
            <person name="Tamir D."/>
            <person name="Parker C."/>
            <person name="Breidt F."/>
            <person name="Broadbent J.R."/>
            <person name="Hutkins R."/>
            <person name="O'Sullivan D."/>
            <person name="Steele J."/>
            <person name="Unlu G."/>
            <person name="Saier M.H. Jr."/>
            <person name="Klaenhammer T."/>
            <person name="Richardson P."/>
            <person name="Kozyavkin S."/>
            <person name="Weimer B.C."/>
            <person name="Mills D.A."/>
        </authorList>
    </citation>
    <scope>NUCLEOTIDE SEQUENCE [LARGE SCALE GENOMIC DNA]</scope>
    <source>
        <strain>SK11</strain>
    </source>
</reference>
<evidence type="ECO:0000255" key="1">
    <source>
        <dbReference type="HAMAP-Rule" id="MF_01013"/>
    </source>
</evidence>
<comment type="function">
    <text evidence="1">IGPS catalyzes the conversion of PRFAR and glutamine to IGP, AICAR and glutamate. The HisF subunit catalyzes the cyclization activity that produces IGP and AICAR from PRFAR using the ammonia provided by the HisH subunit.</text>
</comment>
<comment type="catalytic activity">
    <reaction evidence="1">
        <text>5-[(5-phospho-1-deoxy-D-ribulos-1-ylimino)methylamino]-1-(5-phospho-beta-D-ribosyl)imidazole-4-carboxamide + L-glutamine = D-erythro-1-(imidazol-4-yl)glycerol 3-phosphate + 5-amino-1-(5-phospho-beta-D-ribosyl)imidazole-4-carboxamide + L-glutamate + H(+)</text>
        <dbReference type="Rhea" id="RHEA:24793"/>
        <dbReference type="ChEBI" id="CHEBI:15378"/>
        <dbReference type="ChEBI" id="CHEBI:29985"/>
        <dbReference type="ChEBI" id="CHEBI:58278"/>
        <dbReference type="ChEBI" id="CHEBI:58359"/>
        <dbReference type="ChEBI" id="CHEBI:58475"/>
        <dbReference type="ChEBI" id="CHEBI:58525"/>
        <dbReference type="EC" id="4.3.2.10"/>
    </reaction>
</comment>
<comment type="pathway">
    <text evidence="1">Amino-acid biosynthesis; L-histidine biosynthesis; L-histidine from 5-phospho-alpha-D-ribose 1-diphosphate: step 5/9.</text>
</comment>
<comment type="subunit">
    <text evidence="1">Heterodimer of HisH and HisF.</text>
</comment>
<comment type="subcellular location">
    <subcellularLocation>
        <location evidence="1">Cytoplasm</location>
    </subcellularLocation>
</comment>
<comment type="similarity">
    <text evidence="1">Belongs to the HisA/HisF family.</text>
</comment>
<proteinExistence type="inferred from homology"/>
<accession>Q02YX1</accession>
<dbReference type="EC" id="4.3.2.10" evidence="1"/>
<dbReference type="EMBL" id="CP000425">
    <property type="protein sequence ID" value="ABJ72851.1"/>
    <property type="molecule type" value="Genomic_DNA"/>
</dbReference>
<dbReference type="RefSeq" id="WP_011676146.1">
    <property type="nucleotide sequence ID" value="NC_008527.1"/>
</dbReference>
<dbReference type="SMR" id="Q02YX1"/>
<dbReference type="KEGG" id="llc:LACR_1327"/>
<dbReference type="HOGENOM" id="CLU_048577_4_0_9"/>
<dbReference type="UniPathway" id="UPA00031">
    <property type="reaction ID" value="UER00010"/>
</dbReference>
<dbReference type="Proteomes" id="UP000000240">
    <property type="component" value="Chromosome"/>
</dbReference>
<dbReference type="GO" id="GO:0005737">
    <property type="term" value="C:cytoplasm"/>
    <property type="evidence" value="ECO:0007669"/>
    <property type="project" value="UniProtKB-SubCell"/>
</dbReference>
<dbReference type="GO" id="GO:0000107">
    <property type="term" value="F:imidazoleglycerol-phosphate synthase activity"/>
    <property type="evidence" value="ECO:0007669"/>
    <property type="project" value="UniProtKB-UniRule"/>
</dbReference>
<dbReference type="GO" id="GO:0016829">
    <property type="term" value="F:lyase activity"/>
    <property type="evidence" value="ECO:0007669"/>
    <property type="project" value="UniProtKB-KW"/>
</dbReference>
<dbReference type="GO" id="GO:0000105">
    <property type="term" value="P:L-histidine biosynthetic process"/>
    <property type="evidence" value="ECO:0007669"/>
    <property type="project" value="UniProtKB-UniRule"/>
</dbReference>
<dbReference type="CDD" id="cd04731">
    <property type="entry name" value="HisF"/>
    <property type="match status" value="1"/>
</dbReference>
<dbReference type="FunFam" id="3.20.20.70:FF:000006">
    <property type="entry name" value="Imidazole glycerol phosphate synthase subunit HisF"/>
    <property type="match status" value="1"/>
</dbReference>
<dbReference type="Gene3D" id="3.20.20.70">
    <property type="entry name" value="Aldolase class I"/>
    <property type="match status" value="1"/>
</dbReference>
<dbReference type="HAMAP" id="MF_01013">
    <property type="entry name" value="HisF"/>
    <property type="match status" value="1"/>
</dbReference>
<dbReference type="InterPro" id="IPR013785">
    <property type="entry name" value="Aldolase_TIM"/>
</dbReference>
<dbReference type="InterPro" id="IPR006062">
    <property type="entry name" value="His_biosynth"/>
</dbReference>
<dbReference type="InterPro" id="IPR004651">
    <property type="entry name" value="HisF"/>
</dbReference>
<dbReference type="InterPro" id="IPR050064">
    <property type="entry name" value="IGPS_HisA/HisF"/>
</dbReference>
<dbReference type="InterPro" id="IPR011060">
    <property type="entry name" value="RibuloseP-bd_barrel"/>
</dbReference>
<dbReference type="NCBIfam" id="TIGR00735">
    <property type="entry name" value="hisF"/>
    <property type="match status" value="1"/>
</dbReference>
<dbReference type="PANTHER" id="PTHR21235:SF2">
    <property type="entry name" value="IMIDAZOLE GLYCEROL PHOSPHATE SYNTHASE HISHF"/>
    <property type="match status" value="1"/>
</dbReference>
<dbReference type="PANTHER" id="PTHR21235">
    <property type="entry name" value="IMIDAZOLE GLYCEROL PHOSPHATE SYNTHASE SUBUNIT HISF/H IGP SYNTHASE SUBUNIT HISF/H"/>
    <property type="match status" value="1"/>
</dbReference>
<dbReference type="Pfam" id="PF00977">
    <property type="entry name" value="His_biosynth"/>
    <property type="match status" value="1"/>
</dbReference>
<dbReference type="SUPFAM" id="SSF51366">
    <property type="entry name" value="Ribulose-phoshate binding barrel"/>
    <property type="match status" value="1"/>
</dbReference>
<sequence>MLTKRIIPCLDIKNGKVVKGINFVGLKEIGDPVEIAKIYEEQCADEIVFLDITASFEEREIIGELIGRAARELSIPLTVGGGIRSINDFRRILASGADKVSINSAAIENPELIHQAANEFGVQCVVVAIDAKANESGSSFEVYIKGGRENTGIDLVEWAKKCEKLGAGEILLTSMDKDGTKTGYDLKMLNAVCSAVNIPVIASGGCGSISDIIEVFEKTKSDAALFASLFHYGEATVDEVKEELIKNRIPARIIKKEII</sequence>
<feature type="chain" id="PRO_1000063075" description="Imidazole glycerol phosphate synthase subunit HisF">
    <location>
        <begin position="1"/>
        <end position="259"/>
    </location>
</feature>
<feature type="active site" evidence="1">
    <location>
        <position position="11"/>
    </location>
</feature>
<feature type="active site" evidence="1">
    <location>
        <position position="130"/>
    </location>
</feature>
<keyword id="KW-0028">Amino-acid biosynthesis</keyword>
<keyword id="KW-0963">Cytoplasm</keyword>
<keyword id="KW-0368">Histidine biosynthesis</keyword>
<keyword id="KW-0456">Lyase</keyword>
<protein>
    <recommendedName>
        <fullName evidence="1">Imidazole glycerol phosphate synthase subunit HisF</fullName>
        <ecNumber evidence="1">4.3.2.10</ecNumber>
    </recommendedName>
    <alternativeName>
        <fullName evidence="1">IGP synthase cyclase subunit</fullName>
    </alternativeName>
    <alternativeName>
        <fullName evidence="1">IGP synthase subunit HisF</fullName>
    </alternativeName>
    <alternativeName>
        <fullName evidence="1">ImGP synthase subunit HisF</fullName>
        <shortName evidence="1">IGPS subunit HisF</shortName>
    </alternativeName>
</protein>
<gene>
    <name evidence="1" type="primary">hisF</name>
    <name type="ordered locus">LACR_1327</name>
</gene>